<gene>
    <name evidence="1" type="primary">murD</name>
    <name type="ordered locus">RL3309</name>
</gene>
<reference key="1">
    <citation type="journal article" date="2006" name="Genome Biol.">
        <title>The genome of Rhizobium leguminosarum has recognizable core and accessory components.</title>
        <authorList>
            <person name="Young J.P.W."/>
            <person name="Crossman L.C."/>
            <person name="Johnston A.W.B."/>
            <person name="Thomson N.R."/>
            <person name="Ghazoui Z.F."/>
            <person name="Hull K.H."/>
            <person name="Wexler M."/>
            <person name="Curson A.R.J."/>
            <person name="Todd J.D."/>
            <person name="Poole P.S."/>
            <person name="Mauchline T.H."/>
            <person name="East A.K."/>
            <person name="Quail M.A."/>
            <person name="Churcher C."/>
            <person name="Arrowsmith C."/>
            <person name="Cherevach I."/>
            <person name="Chillingworth T."/>
            <person name="Clarke K."/>
            <person name="Cronin A."/>
            <person name="Davis P."/>
            <person name="Fraser A."/>
            <person name="Hance Z."/>
            <person name="Hauser H."/>
            <person name="Jagels K."/>
            <person name="Moule S."/>
            <person name="Mungall K."/>
            <person name="Norbertczak H."/>
            <person name="Rabbinowitsch E."/>
            <person name="Sanders M."/>
            <person name="Simmonds M."/>
            <person name="Whitehead S."/>
            <person name="Parkhill J."/>
        </authorList>
    </citation>
    <scope>NUCLEOTIDE SEQUENCE [LARGE SCALE GENOMIC DNA]</scope>
    <source>
        <strain>DSM 114642 / LMG 32736 / 3841</strain>
    </source>
</reference>
<organism>
    <name type="scientific">Rhizobium johnstonii (strain DSM 114642 / LMG 32736 / 3841)</name>
    <name type="common">Rhizobium leguminosarum bv. viciae</name>
    <dbReference type="NCBI Taxonomy" id="216596"/>
    <lineage>
        <taxon>Bacteria</taxon>
        <taxon>Pseudomonadati</taxon>
        <taxon>Pseudomonadota</taxon>
        <taxon>Alphaproteobacteria</taxon>
        <taxon>Hyphomicrobiales</taxon>
        <taxon>Rhizobiaceae</taxon>
        <taxon>Rhizobium/Agrobacterium group</taxon>
        <taxon>Rhizobium</taxon>
        <taxon>Rhizobium johnstonii</taxon>
    </lineage>
</organism>
<protein>
    <recommendedName>
        <fullName evidence="1">UDP-N-acetylmuramoylalanine--D-glutamate ligase</fullName>
        <ecNumber evidence="1">6.3.2.9</ecNumber>
    </recommendedName>
    <alternativeName>
        <fullName evidence="1">D-glutamic acid-adding enzyme</fullName>
    </alternativeName>
    <alternativeName>
        <fullName evidence="1">UDP-N-acetylmuramoyl-L-alanyl-D-glutamate synthetase</fullName>
    </alternativeName>
</protein>
<dbReference type="EC" id="6.3.2.9" evidence="1"/>
<dbReference type="EMBL" id="AM236080">
    <property type="protein sequence ID" value="CAK08796.1"/>
    <property type="molecule type" value="Genomic_DNA"/>
</dbReference>
<dbReference type="RefSeq" id="WP_011652799.1">
    <property type="nucleotide sequence ID" value="NC_008380.1"/>
</dbReference>
<dbReference type="SMR" id="Q1ME31"/>
<dbReference type="EnsemblBacteria" id="CAK08796">
    <property type="protein sequence ID" value="CAK08796"/>
    <property type="gene ID" value="RL3309"/>
</dbReference>
<dbReference type="KEGG" id="rle:RL3309"/>
<dbReference type="eggNOG" id="COG0771">
    <property type="taxonomic scope" value="Bacteria"/>
</dbReference>
<dbReference type="HOGENOM" id="CLU_032540_3_0_5"/>
<dbReference type="UniPathway" id="UPA00219"/>
<dbReference type="Proteomes" id="UP000006575">
    <property type="component" value="Chromosome"/>
</dbReference>
<dbReference type="GO" id="GO:0005737">
    <property type="term" value="C:cytoplasm"/>
    <property type="evidence" value="ECO:0007669"/>
    <property type="project" value="UniProtKB-SubCell"/>
</dbReference>
<dbReference type="GO" id="GO:0005524">
    <property type="term" value="F:ATP binding"/>
    <property type="evidence" value="ECO:0007669"/>
    <property type="project" value="UniProtKB-UniRule"/>
</dbReference>
<dbReference type="GO" id="GO:0004326">
    <property type="term" value="F:tetrahydrofolylpolyglutamate synthase activity"/>
    <property type="evidence" value="ECO:0007669"/>
    <property type="project" value="InterPro"/>
</dbReference>
<dbReference type="GO" id="GO:0008764">
    <property type="term" value="F:UDP-N-acetylmuramoylalanine-D-glutamate ligase activity"/>
    <property type="evidence" value="ECO:0007669"/>
    <property type="project" value="UniProtKB-UniRule"/>
</dbReference>
<dbReference type="GO" id="GO:0051301">
    <property type="term" value="P:cell division"/>
    <property type="evidence" value="ECO:0007669"/>
    <property type="project" value="UniProtKB-KW"/>
</dbReference>
<dbReference type="GO" id="GO:0071555">
    <property type="term" value="P:cell wall organization"/>
    <property type="evidence" value="ECO:0007669"/>
    <property type="project" value="UniProtKB-KW"/>
</dbReference>
<dbReference type="GO" id="GO:0009252">
    <property type="term" value="P:peptidoglycan biosynthetic process"/>
    <property type="evidence" value="ECO:0007669"/>
    <property type="project" value="UniProtKB-UniRule"/>
</dbReference>
<dbReference type="GO" id="GO:0008360">
    <property type="term" value="P:regulation of cell shape"/>
    <property type="evidence" value="ECO:0007669"/>
    <property type="project" value="UniProtKB-KW"/>
</dbReference>
<dbReference type="Gene3D" id="3.90.190.20">
    <property type="entry name" value="Mur ligase, C-terminal domain"/>
    <property type="match status" value="1"/>
</dbReference>
<dbReference type="Gene3D" id="3.40.1190.10">
    <property type="entry name" value="Mur-like, catalytic domain"/>
    <property type="match status" value="1"/>
</dbReference>
<dbReference type="Gene3D" id="3.40.50.720">
    <property type="entry name" value="NAD(P)-binding Rossmann-like Domain"/>
    <property type="match status" value="1"/>
</dbReference>
<dbReference type="HAMAP" id="MF_00639">
    <property type="entry name" value="MurD"/>
    <property type="match status" value="1"/>
</dbReference>
<dbReference type="InterPro" id="IPR018109">
    <property type="entry name" value="Folylpolyglutamate_synth_CS"/>
</dbReference>
<dbReference type="InterPro" id="IPR036565">
    <property type="entry name" value="Mur-like_cat_sf"/>
</dbReference>
<dbReference type="InterPro" id="IPR036615">
    <property type="entry name" value="Mur_ligase_C_dom_sf"/>
</dbReference>
<dbReference type="InterPro" id="IPR013221">
    <property type="entry name" value="Mur_ligase_cen"/>
</dbReference>
<dbReference type="InterPro" id="IPR005762">
    <property type="entry name" value="MurD"/>
</dbReference>
<dbReference type="NCBIfam" id="TIGR01087">
    <property type="entry name" value="murD"/>
    <property type="match status" value="1"/>
</dbReference>
<dbReference type="PANTHER" id="PTHR43692">
    <property type="entry name" value="UDP-N-ACETYLMURAMOYLALANINE--D-GLUTAMATE LIGASE"/>
    <property type="match status" value="1"/>
</dbReference>
<dbReference type="PANTHER" id="PTHR43692:SF1">
    <property type="entry name" value="UDP-N-ACETYLMURAMOYLALANINE--D-GLUTAMATE LIGASE"/>
    <property type="match status" value="1"/>
</dbReference>
<dbReference type="Pfam" id="PF08245">
    <property type="entry name" value="Mur_ligase_M"/>
    <property type="match status" value="1"/>
</dbReference>
<dbReference type="SUPFAM" id="SSF51984">
    <property type="entry name" value="MurCD N-terminal domain"/>
    <property type="match status" value="1"/>
</dbReference>
<dbReference type="SUPFAM" id="SSF53623">
    <property type="entry name" value="MurD-like peptide ligases, catalytic domain"/>
    <property type="match status" value="1"/>
</dbReference>
<dbReference type="SUPFAM" id="SSF53244">
    <property type="entry name" value="MurD-like peptide ligases, peptide-binding domain"/>
    <property type="match status" value="1"/>
</dbReference>
<evidence type="ECO:0000255" key="1">
    <source>
        <dbReference type="HAMAP-Rule" id="MF_00639"/>
    </source>
</evidence>
<proteinExistence type="inferred from homology"/>
<keyword id="KW-0067">ATP-binding</keyword>
<keyword id="KW-0131">Cell cycle</keyword>
<keyword id="KW-0132">Cell division</keyword>
<keyword id="KW-0133">Cell shape</keyword>
<keyword id="KW-0961">Cell wall biogenesis/degradation</keyword>
<keyword id="KW-0963">Cytoplasm</keyword>
<keyword id="KW-0436">Ligase</keyword>
<keyword id="KW-0547">Nucleotide-binding</keyword>
<keyword id="KW-0573">Peptidoglycan synthesis</keyword>
<accession>Q1ME31</accession>
<feature type="chain" id="PRO_0000257224" description="UDP-N-acetylmuramoylalanine--D-glutamate ligase">
    <location>
        <begin position="1"/>
        <end position="470"/>
    </location>
</feature>
<feature type="binding site" evidence="1">
    <location>
        <begin position="121"/>
        <end position="127"/>
    </location>
    <ligand>
        <name>ATP</name>
        <dbReference type="ChEBI" id="CHEBI:30616"/>
    </ligand>
</feature>
<comment type="function">
    <text evidence="1">Cell wall formation. Catalyzes the addition of glutamate to the nucleotide precursor UDP-N-acetylmuramoyl-L-alanine (UMA).</text>
</comment>
<comment type="catalytic activity">
    <reaction evidence="1">
        <text>UDP-N-acetyl-alpha-D-muramoyl-L-alanine + D-glutamate + ATP = UDP-N-acetyl-alpha-D-muramoyl-L-alanyl-D-glutamate + ADP + phosphate + H(+)</text>
        <dbReference type="Rhea" id="RHEA:16429"/>
        <dbReference type="ChEBI" id="CHEBI:15378"/>
        <dbReference type="ChEBI" id="CHEBI:29986"/>
        <dbReference type="ChEBI" id="CHEBI:30616"/>
        <dbReference type="ChEBI" id="CHEBI:43474"/>
        <dbReference type="ChEBI" id="CHEBI:83898"/>
        <dbReference type="ChEBI" id="CHEBI:83900"/>
        <dbReference type="ChEBI" id="CHEBI:456216"/>
        <dbReference type="EC" id="6.3.2.9"/>
    </reaction>
</comment>
<comment type="pathway">
    <text evidence="1">Cell wall biogenesis; peptidoglycan biosynthesis.</text>
</comment>
<comment type="subcellular location">
    <subcellularLocation>
        <location evidence="1">Cytoplasm</location>
    </subcellularLocation>
</comment>
<comment type="similarity">
    <text evidence="1">Belongs to the MurCDEF family.</text>
</comment>
<name>MURD_RHIJ3</name>
<sequence length="470" mass="49097">MISVTTLKDRKVALFGLGGSGFATARALVTGGAEVTAWDDNPDSVAKAAAEGIRTEDLRNIDWSQQALFVLSPGVPLTHPKPHWTVDLARAAGVDIVGDVELFVRERRAHAPDCPFIAITGTNGKSTTTALIAHILKSAGYDTQLGGNIGTAVLTLDPPKAERYYVVECSSYQIDLAPTLNPSAGILLNLTPDHLDRHGTMQHYADIKERLVAGSDVAIVGVDDSHSALIADRVERAGVKVVRISRRNVVADGIYAEGTKLIQAAGGAMLPFADLDGIQTLRGSHNAQNAAAAVAACLAVGVSADAIRAGLASFPGLKHRMQPVGQRGRVVFVNDSKATNADAAAPALSSYDRIYWIAGGLPKAGGITTLAPYFPRIAKAYLIGEAAAEFAATLGEAVPYEISGTLERAVAHAAADAERDESAASAVMLSPACASFDQYKNFEVRGEAFVGHVAALDGITMLIGPATGEK</sequence>